<gene>
    <name type="ordered locus">PsycPRwf_0637</name>
</gene>
<dbReference type="EMBL" id="CP000713">
    <property type="protein sequence ID" value="ABQ93592.1"/>
    <property type="molecule type" value="Genomic_DNA"/>
</dbReference>
<dbReference type="SMR" id="A5WD51"/>
<dbReference type="STRING" id="349106.PsycPRwf_0637"/>
<dbReference type="KEGG" id="prw:PsycPRwf_0637"/>
<dbReference type="eggNOG" id="COG3022">
    <property type="taxonomic scope" value="Bacteria"/>
</dbReference>
<dbReference type="HOGENOM" id="CLU_061989_0_0_6"/>
<dbReference type="GO" id="GO:0005829">
    <property type="term" value="C:cytosol"/>
    <property type="evidence" value="ECO:0007669"/>
    <property type="project" value="TreeGrafter"/>
</dbReference>
<dbReference type="GO" id="GO:0033194">
    <property type="term" value="P:response to hydroperoxide"/>
    <property type="evidence" value="ECO:0007669"/>
    <property type="project" value="TreeGrafter"/>
</dbReference>
<dbReference type="HAMAP" id="MF_00652">
    <property type="entry name" value="UPF0246"/>
    <property type="match status" value="1"/>
</dbReference>
<dbReference type="InterPro" id="IPR005583">
    <property type="entry name" value="YaaA"/>
</dbReference>
<dbReference type="NCBIfam" id="NF002542">
    <property type="entry name" value="PRK02101.1-3"/>
    <property type="match status" value="1"/>
</dbReference>
<dbReference type="PANTHER" id="PTHR30283:SF4">
    <property type="entry name" value="PEROXIDE STRESS RESISTANCE PROTEIN YAAA"/>
    <property type="match status" value="1"/>
</dbReference>
<dbReference type="PANTHER" id="PTHR30283">
    <property type="entry name" value="PEROXIDE STRESS RESPONSE PROTEIN YAAA"/>
    <property type="match status" value="1"/>
</dbReference>
<dbReference type="Pfam" id="PF03883">
    <property type="entry name" value="H2O2_YaaD"/>
    <property type="match status" value="1"/>
</dbReference>
<proteinExistence type="inferred from homology"/>
<protein>
    <recommendedName>
        <fullName evidence="1">UPF0246 protein PsycPRwf_0637</fullName>
    </recommendedName>
</protein>
<reference key="1">
    <citation type="submission" date="2007-05" db="EMBL/GenBank/DDBJ databases">
        <title>Complete sequence of chromosome of Psychrobacter sp. PRwf-1.</title>
        <authorList>
            <consortium name="US DOE Joint Genome Institute"/>
            <person name="Copeland A."/>
            <person name="Lucas S."/>
            <person name="Lapidus A."/>
            <person name="Barry K."/>
            <person name="Detter J.C."/>
            <person name="Glavina del Rio T."/>
            <person name="Hammon N."/>
            <person name="Israni S."/>
            <person name="Dalin E."/>
            <person name="Tice H."/>
            <person name="Pitluck S."/>
            <person name="Chain P."/>
            <person name="Malfatti S."/>
            <person name="Shin M."/>
            <person name="Vergez L."/>
            <person name="Schmutz J."/>
            <person name="Larimer F."/>
            <person name="Land M."/>
            <person name="Hauser L."/>
            <person name="Kyrpides N."/>
            <person name="Kim E."/>
            <person name="Tiedje J."/>
            <person name="Richardson P."/>
        </authorList>
    </citation>
    <scope>NUCLEOTIDE SEQUENCE [LARGE SCALE GENOMIC DNA]</scope>
    <source>
        <strain>PRwf-1</strain>
    </source>
</reference>
<feature type="chain" id="PRO_1000072697" description="UPF0246 protein PsycPRwf_0637">
    <location>
        <begin position="1"/>
        <end position="270"/>
    </location>
</feature>
<comment type="similarity">
    <text evidence="1">Belongs to the UPF0246 family.</text>
</comment>
<accession>A5WD51</accession>
<sequence>MYFVLSPAKSLNEKDAVSVKVGNYYSQPELIEDAQALMKILKSKEPIDLQALMSISDDLAQLNAQRNQDWAWSEDKPFTEDNAKPAGYLFDGDVYTGLDMYSADKQTVVYLNEHLGILSGLYGVLKPLDMIQPYRLEMGTKLKNEQGDNLYEFWGEHITDVINQRMKDTSEQGEDNILINLASNEYFKAVKKKSLDAAIITPRFEDEKNGKYKVISFYAKKARGLMVRYAADNKITKAEDLKQFDLAGYYYVDELSDDKTWVFRRDEASQ</sequence>
<name>Y637_PSYWF</name>
<organism>
    <name type="scientific">Psychrobacter sp. (strain PRwf-1)</name>
    <dbReference type="NCBI Taxonomy" id="349106"/>
    <lineage>
        <taxon>Bacteria</taxon>
        <taxon>Pseudomonadati</taxon>
        <taxon>Pseudomonadota</taxon>
        <taxon>Gammaproteobacteria</taxon>
        <taxon>Moraxellales</taxon>
        <taxon>Moraxellaceae</taxon>
        <taxon>Psychrobacter</taxon>
    </lineage>
</organism>
<evidence type="ECO:0000255" key="1">
    <source>
        <dbReference type="HAMAP-Rule" id="MF_00652"/>
    </source>
</evidence>